<protein>
    <recommendedName>
        <fullName evidence="1">Small ribosomal subunit protein eS17</fullName>
    </recommendedName>
    <alternativeName>
        <fullName evidence="2">30S ribosomal protein S17e</fullName>
    </alternativeName>
</protein>
<comment type="similarity">
    <text evidence="1">Belongs to the eukaryotic ribosomal protein eS17 family.</text>
</comment>
<gene>
    <name evidence="1" type="primary">rps17e</name>
    <name type="ordered locus">Tneu_0050</name>
</gene>
<proteinExistence type="inferred from homology"/>
<dbReference type="EMBL" id="CP001014">
    <property type="protein sequence ID" value="ACB39008.1"/>
    <property type="molecule type" value="Genomic_DNA"/>
</dbReference>
<dbReference type="RefSeq" id="WP_012349429.1">
    <property type="nucleotide sequence ID" value="NC_010525.1"/>
</dbReference>
<dbReference type="SMR" id="B1YA34"/>
<dbReference type="STRING" id="444157.Tneu_0050"/>
<dbReference type="GeneID" id="6164811"/>
<dbReference type="KEGG" id="tne:Tneu_0050"/>
<dbReference type="eggNOG" id="arCOG01885">
    <property type="taxonomic scope" value="Archaea"/>
</dbReference>
<dbReference type="HOGENOM" id="CLU_176720_2_0_2"/>
<dbReference type="OrthoDB" id="52479at2157"/>
<dbReference type="Proteomes" id="UP000001694">
    <property type="component" value="Chromosome"/>
</dbReference>
<dbReference type="GO" id="GO:0005829">
    <property type="term" value="C:cytosol"/>
    <property type="evidence" value="ECO:0007669"/>
    <property type="project" value="UniProtKB-ARBA"/>
</dbReference>
<dbReference type="GO" id="GO:1990904">
    <property type="term" value="C:ribonucleoprotein complex"/>
    <property type="evidence" value="ECO:0007669"/>
    <property type="project" value="UniProtKB-KW"/>
</dbReference>
<dbReference type="GO" id="GO:0005840">
    <property type="term" value="C:ribosome"/>
    <property type="evidence" value="ECO:0007669"/>
    <property type="project" value="UniProtKB-KW"/>
</dbReference>
<dbReference type="GO" id="GO:0003735">
    <property type="term" value="F:structural constituent of ribosome"/>
    <property type="evidence" value="ECO:0007669"/>
    <property type="project" value="InterPro"/>
</dbReference>
<dbReference type="GO" id="GO:0006412">
    <property type="term" value="P:translation"/>
    <property type="evidence" value="ECO:0007669"/>
    <property type="project" value="UniProtKB-UniRule"/>
</dbReference>
<dbReference type="Gene3D" id="1.10.60.20">
    <property type="entry name" value="Ribosomal protein S17e-like"/>
    <property type="match status" value="1"/>
</dbReference>
<dbReference type="HAMAP" id="MF_00511">
    <property type="entry name" value="Ribosomal_eS17"/>
    <property type="match status" value="1"/>
</dbReference>
<dbReference type="InterPro" id="IPR001210">
    <property type="entry name" value="Ribosomal_eS17"/>
</dbReference>
<dbReference type="InterPro" id="IPR018273">
    <property type="entry name" value="Ribosomal_eS17_CS"/>
</dbReference>
<dbReference type="InterPro" id="IPR036401">
    <property type="entry name" value="Ribosomal_eS17_sf"/>
</dbReference>
<dbReference type="NCBIfam" id="NF002242">
    <property type="entry name" value="PRK01151.1"/>
    <property type="match status" value="1"/>
</dbReference>
<dbReference type="PANTHER" id="PTHR10732">
    <property type="entry name" value="40S RIBOSOMAL PROTEIN S17"/>
    <property type="match status" value="1"/>
</dbReference>
<dbReference type="PANTHER" id="PTHR10732:SF0">
    <property type="entry name" value="40S RIBOSOMAL PROTEIN S17"/>
    <property type="match status" value="1"/>
</dbReference>
<dbReference type="Pfam" id="PF00833">
    <property type="entry name" value="Ribosomal_S17e"/>
    <property type="match status" value="1"/>
</dbReference>
<dbReference type="SUPFAM" id="SSF116820">
    <property type="entry name" value="Rps17e-like"/>
    <property type="match status" value="1"/>
</dbReference>
<dbReference type="PROSITE" id="PS00712">
    <property type="entry name" value="RIBOSOMAL_S17E"/>
    <property type="match status" value="1"/>
</dbReference>
<reference key="1">
    <citation type="submission" date="2008-03" db="EMBL/GenBank/DDBJ databases">
        <title>Complete sequence of Thermoproteus neutrophilus V24Sta.</title>
        <authorList>
            <consortium name="US DOE Joint Genome Institute"/>
            <person name="Copeland A."/>
            <person name="Lucas S."/>
            <person name="Lapidus A."/>
            <person name="Glavina del Rio T."/>
            <person name="Dalin E."/>
            <person name="Tice H."/>
            <person name="Bruce D."/>
            <person name="Goodwin L."/>
            <person name="Pitluck S."/>
            <person name="Sims D."/>
            <person name="Brettin T."/>
            <person name="Detter J.C."/>
            <person name="Han C."/>
            <person name="Kuske C.R."/>
            <person name="Schmutz J."/>
            <person name="Larimer F."/>
            <person name="Land M."/>
            <person name="Hauser L."/>
            <person name="Kyrpides N."/>
            <person name="Mikhailova N."/>
            <person name="Biddle J.F."/>
            <person name="Zhang Z."/>
            <person name="Fitz-Gibbon S.T."/>
            <person name="Lowe T.M."/>
            <person name="Saltikov C."/>
            <person name="House C.H."/>
            <person name="Richardson P."/>
        </authorList>
    </citation>
    <scope>NUCLEOTIDE SEQUENCE [LARGE SCALE GENOMIC DNA]</scope>
    <source>
        <strain>DSM 2338 / JCM 9278 / NBRC 100436 / V24Sta</strain>
    </source>
</reference>
<sequence>MGRVRPRYIKSLGDKLLEMYPDRFTDSFEENKKAVAQLADIPSKRVRNRVAGYITRLVKRRKAQEKAEAAA</sequence>
<keyword id="KW-0687">Ribonucleoprotein</keyword>
<keyword id="KW-0689">Ribosomal protein</keyword>
<evidence type="ECO:0000255" key="1">
    <source>
        <dbReference type="HAMAP-Rule" id="MF_00511"/>
    </source>
</evidence>
<evidence type="ECO:0000305" key="2"/>
<organism>
    <name type="scientific">Pyrobaculum neutrophilum (strain DSM 2338 / JCM 9278 / NBRC 100436 / V24Sta)</name>
    <name type="common">Thermoproteus neutrophilus</name>
    <dbReference type="NCBI Taxonomy" id="444157"/>
    <lineage>
        <taxon>Archaea</taxon>
        <taxon>Thermoproteota</taxon>
        <taxon>Thermoprotei</taxon>
        <taxon>Thermoproteales</taxon>
        <taxon>Thermoproteaceae</taxon>
        <taxon>Pyrobaculum</taxon>
    </lineage>
</organism>
<accession>B1YA34</accession>
<feature type="chain" id="PRO_1000127260" description="Small ribosomal subunit protein eS17">
    <location>
        <begin position="1"/>
        <end position="71"/>
    </location>
</feature>
<name>RS17E_PYRNV</name>